<feature type="chain" id="PRO_0000351236" description="Uncharacterized protein DDB_G0282865">
    <location>
        <begin position="1"/>
        <end position="229"/>
    </location>
</feature>
<dbReference type="EMBL" id="AAFI02000047">
    <property type="protein sequence ID" value="EAL66012.1"/>
    <property type="status" value="ALT_INIT"/>
    <property type="molecule type" value="Genomic_DNA"/>
</dbReference>
<dbReference type="RefSeq" id="XP_639368.1">
    <property type="nucleotide sequence ID" value="XM_634276.1"/>
</dbReference>
<dbReference type="PaxDb" id="44689-DDB0205000"/>
<dbReference type="EnsemblProtists" id="EAL66012">
    <property type="protein sequence ID" value="EAL66012"/>
    <property type="gene ID" value="DDB_G0282865"/>
</dbReference>
<dbReference type="GeneID" id="8623808"/>
<dbReference type="KEGG" id="ddi:DDB_G0282865"/>
<dbReference type="dictyBase" id="DDB_G0282865"/>
<dbReference type="VEuPathDB" id="AmoebaDB:DDB_G0282865"/>
<dbReference type="InParanoid" id="Q54RW9"/>
<dbReference type="PRO" id="PR:Q54RW9"/>
<dbReference type="Proteomes" id="UP000002195">
    <property type="component" value="Chromosome 3"/>
</dbReference>
<proteinExistence type="predicted"/>
<organism>
    <name type="scientific">Dictyostelium discoideum</name>
    <name type="common">Social amoeba</name>
    <dbReference type="NCBI Taxonomy" id="44689"/>
    <lineage>
        <taxon>Eukaryota</taxon>
        <taxon>Amoebozoa</taxon>
        <taxon>Evosea</taxon>
        <taxon>Eumycetozoa</taxon>
        <taxon>Dictyostelia</taxon>
        <taxon>Dictyosteliales</taxon>
        <taxon>Dictyosteliaceae</taxon>
        <taxon>Dictyostelium</taxon>
    </lineage>
</organism>
<evidence type="ECO:0000305" key="1"/>
<accession>Q54RW9</accession>
<protein>
    <recommendedName>
        <fullName>Uncharacterized protein DDB_G0282865</fullName>
    </recommendedName>
</protein>
<reference key="1">
    <citation type="journal article" date="2005" name="Nature">
        <title>The genome of the social amoeba Dictyostelium discoideum.</title>
        <authorList>
            <person name="Eichinger L."/>
            <person name="Pachebat J.A."/>
            <person name="Gloeckner G."/>
            <person name="Rajandream M.A."/>
            <person name="Sucgang R."/>
            <person name="Berriman M."/>
            <person name="Song J."/>
            <person name="Olsen R."/>
            <person name="Szafranski K."/>
            <person name="Xu Q."/>
            <person name="Tunggal B."/>
            <person name="Kummerfeld S."/>
            <person name="Madera M."/>
            <person name="Konfortov B.A."/>
            <person name="Rivero F."/>
            <person name="Bankier A.T."/>
            <person name="Lehmann R."/>
            <person name="Hamlin N."/>
            <person name="Davies R."/>
            <person name="Gaudet P."/>
            <person name="Fey P."/>
            <person name="Pilcher K."/>
            <person name="Chen G."/>
            <person name="Saunders D."/>
            <person name="Sodergren E.J."/>
            <person name="Davis P."/>
            <person name="Kerhornou A."/>
            <person name="Nie X."/>
            <person name="Hall N."/>
            <person name="Anjard C."/>
            <person name="Hemphill L."/>
            <person name="Bason N."/>
            <person name="Farbrother P."/>
            <person name="Desany B."/>
            <person name="Just E."/>
            <person name="Morio T."/>
            <person name="Rost R."/>
            <person name="Churcher C.M."/>
            <person name="Cooper J."/>
            <person name="Haydock S."/>
            <person name="van Driessche N."/>
            <person name="Cronin A."/>
            <person name="Goodhead I."/>
            <person name="Muzny D.M."/>
            <person name="Mourier T."/>
            <person name="Pain A."/>
            <person name="Lu M."/>
            <person name="Harper D."/>
            <person name="Lindsay R."/>
            <person name="Hauser H."/>
            <person name="James K.D."/>
            <person name="Quiles M."/>
            <person name="Madan Babu M."/>
            <person name="Saito T."/>
            <person name="Buchrieser C."/>
            <person name="Wardroper A."/>
            <person name="Felder M."/>
            <person name="Thangavelu M."/>
            <person name="Johnson D."/>
            <person name="Knights A."/>
            <person name="Loulseged H."/>
            <person name="Mungall K.L."/>
            <person name="Oliver K."/>
            <person name="Price C."/>
            <person name="Quail M.A."/>
            <person name="Urushihara H."/>
            <person name="Hernandez J."/>
            <person name="Rabbinowitsch E."/>
            <person name="Steffen D."/>
            <person name="Sanders M."/>
            <person name="Ma J."/>
            <person name="Kohara Y."/>
            <person name="Sharp S."/>
            <person name="Simmonds M.N."/>
            <person name="Spiegler S."/>
            <person name="Tivey A."/>
            <person name="Sugano S."/>
            <person name="White B."/>
            <person name="Walker D."/>
            <person name="Woodward J.R."/>
            <person name="Winckler T."/>
            <person name="Tanaka Y."/>
            <person name="Shaulsky G."/>
            <person name="Schleicher M."/>
            <person name="Weinstock G.M."/>
            <person name="Rosenthal A."/>
            <person name="Cox E.C."/>
            <person name="Chisholm R.L."/>
            <person name="Gibbs R.A."/>
            <person name="Loomis W.F."/>
            <person name="Platzer M."/>
            <person name="Kay R.R."/>
            <person name="Williams J.G."/>
            <person name="Dear P.H."/>
            <person name="Noegel A.A."/>
            <person name="Barrell B.G."/>
            <person name="Kuspa A."/>
        </authorList>
    </citation>
    <scope>NUCLEOTIDE SEQUENCE [LARGE SCALE GENOMIC DNA]</scope>
    <source>
        <strain>AX4</strain>
    </source>
</reference>
<name>Y5000_DICDI</name>
<keyword id="KW-1185">Reference proteome</keyword>
<comment type="sequence caution" evidence="1">
    <conflict type="erroneous initiation">
        <sequence resource="EMBL-CDS" id="EAL66012"/>
    </conflict>
    <text>Truncated N-terminus.</text>
</comment>
<gene>
    <name type="ORF">DDB_G0282865</name>
</gene>
<sequence length="229" mass="26161">MTLDRDLFYFYLTPEEMNAARAYLYSSSTSSIEISNNSKSNNCCNNSSIPSTPNTPITPLKNNNITIVNNKTNDNKINDDKINDNKISDDKNNDDRIVLFEETFFSQLIPSSNSSSIPILETFMNDEEFEFTFDESKPFCPTNSYCTLNQQNNNSQFFTVPSQYVTKSVSIPSHFINNTPISLSNNNNNNNNNNIINNNINKNNNNNSKGFKNILILRKIFTLKKKKKK</sequence>